<organism>
    <name type="scientific">Pasteurella multocida (strain Pm70)</name>
    <dbReference type="NCBI Taxonomy" id="272843"/>
    <lineage>
        <taxon>Bacteria</taxon>
        <taxon>Pseudomonadati</taxon>
        <taxon>Pseudomonadota</taxon>
        <taxon>Gammaproteobacteria</taxon>
        <taxon>Pasteurellales</taxon>
        <taxon>Pasteurellaceae</taxon>
        <taxon>Pasteurella</taxon>
    </lineage>
</organism>
<keyword id="KW-1003">Cell membrane</keyword>
<keyword id="KW-0472">Membrane</keyword>
<keyword id="KW-1185">Reference proteome</keyword>
<keyword id="KW-0812">Transmembrane</keyword>
<keyword id="KW-1133">Transmembrane helix</keyword>
<evidence type="ECO:0000255" key="1"/>
<evidence type="ECO:0000305" key="2"/>
<feature type="chain" id="PRO_0000216326" description="Uncharacterized protein PM1478">
    <location>
        <begin position="1"/>
        <end position="120"/>
    </location>
</feature>
<feature type="transmembrane region" description="Helical" evidence="1">
    <location>
        <begin position="20"/>
        <end position="39"/>
    </location>
</feature>
<feature type="transmembrane region" description="Helical" evidence="1">
    <location>
        <begin position="52"/>
        <end position="71"/>
    </location>
</feature>
<feature type="transmembrane region" description="Helical" evidence="1">
    <location>
        <begin position="86"/>
        <end position="108"/>
    </location>
</feature>
<accession>Q9CKX3</accession>
<dbReference type="EMBL" id="AE004439">
    <property type="protein sequence ID" value="AAK03562.1"/>
    <property type="molecule type" value="Genomic_DNA"/>
</dbReference>
<dbReference type="RefSeq" id="WP_010907189.1">
    <property type="nucleotide sequence ID" value="NC_002663.1"/>
</dbReference>
<dbReference type="SMR" id="Q9CKX3"/>
<dbReference type="STRING" id="272843.PM1478"/>
<dbReference type="EnsemblBacteria" id="AAK03562">
    <property type="protein sequence ID" value="AAK03562"/>
    <property type="gene ID" value="PM1478"/>
</dbReference>
<dbReference type="KEGG" id="pmu:PM1478"/>
<dbReference type="PATRIC" id="fig|272843.6.peg.1494"/>
<dbReference type="HOGENOM" id="CLU_163379_0_0_6"/>
<dbReference type="OrthoDB" id="5690919at2"/>
<dbReference type="Proteomes" id="UP000000809">
    <property type="component" value="Chromosome"/>
</dbReference>
<dbReference type="GO" id="GO:0005886">
    <property type="term" value="C:plasma membrane"/>
    <property type="evidence" value="ECO:0007669"/>
    <property type="project" value="UniProtKB-SubCell"/>
</dbReference>
<dbReference type="InterPro" id="IPR035308">
    <property type="entry name" value="DUF5368"/>
</dbReference>
<dbReference type="Pfam" id="PF17336">
    <property type="entry name" value="DUF5368"/>
    <property type="match status" value="1"/>
</dbReference>
<reference key="1">
    <citation type="journal article" date="2001" name="Proc. Natl. Acad. Sci. U.S.A.">
        <title>Complete genomic sequence of Pasteurella multocida Pm70.</title>
        <authorList>
            <person name="May B.J."/>
            <person name="Zhang Q."/>
            <person name="Li L.L."/>
            <person name="Paustian M.L."/>
            <person name="Whittam T.S."/>
            <person name="Kapur V."/>
        </authorList>
    </citation>
    <scope>NUCLEOTIDE SEQUENCE [LARGE SCALE GENOMIC DNA]</scope>
    <source>
        <strain>Pm70</strain>
    </source>
</reference>
<sequence>MKEFQFDTLWAVMQIMLGAFFWPALIVIILTIAAFCYLLIKEKGLVACRLKGSSLVGLLGGILALYLLFSISQASISDIGGPIDLILVVLAYFGGFLASTMLLYSIIGFVKPRSCACQKN</sequence>
<comment type="subcellular location">
    <subcellularLocation>
        <location evidence="2">Cell membrane</location>
        <topology evidence="2">Multi-pass membrane protein</topology>
    </subcellularLocation>
</comment>
<proteinExistence type="predicted"/>
<protein>
    <recommendedName>
        <fullName>Uncharacterized protein PM1478</fullName>
    </recommendedName>
</protein>
<name>Y1478_PASMU</name>
<gene>
    <name type="ordered locus">PM1478</name>
</gene>